<sequence>MKTAQELRVGNVVMIGNDAWVVSKTEYNKSGRNAAVVKMKLKNLLNGGGQESVYKADDKFEVVVLDRKEVTYSYFADPMYVFMDADYNQYEVEAEMMGDALNYLEDGMACEVVFYNEKAISVELPTILVREITYTEPAVKGDTSSGKVLKNAKLATGFELQVPLFCNTGDKIEIDTRTNEYRSRA</sequence>
<feature type="chain" id="PRO_1000010702" description="Elongation factor P">
    <location>
        <begin position="1"/>
        <end position="185"/>
    </location>
</feature>
<keyword id="KW-0963">Cytoplasm</keyword>
<keyword id="KW-0251">Elongation factor</keyword>
<keyword id="KW-0648">Protein biosynthesis</keyword>
<evidence type="ECO:0000255" key="1">
    <source>
        <dbReference type="HAMAP-Rule" id="MF_00141"/>
    </source>
</evidence>
<gene>
    <name evidence="1" type="primary">efp</name>
    <name type="ordered locus">BURPS668_2771</name>
</gene>
<comment type="function">
    <text evidence="1">Involved in peptide bond synthesis. Stimulates efficient translation and peptide-bond synthesis on native or reconstituted 70S ribosomes in vitro. Probably functions indirectly by altering the affinity of the ribosome for aminoacyl-tRNA, thus increasing their reactivity as acceptors for peptidyl transferase.</text>
</comment>
<comment type="pathway">
    <text evidence="1">Protein biosynthesis; polypeptide chain elongation.</text>
</comment>
<comment type="subcellular location">
    <subcellularLocation>
        <location evidence="1">Cytoplasm</location>
    </subcellularLocation>
</comment>
<comment type="similarity">
    <text evidence="1">Belongs to the elongation factor P family.</text>
</comment>
<reference key="1">
    <citation type="journal article" date="2010" name="Genome Biol. Evol.">
        <title>Continuing evolution of Burkholderia mallei through genome reduction and large-scale rearrangements.</title>
        <authorList>
            <person name="Losada L."/>
            <person name="Ronning C.M."/>
            <person name="DeShazer D."/>
            <person name="Woods D."/>
            <person name="Fedorova N."/>
            <person name="Kim H.S."/>
            <person name="Shabalina S.A."/>
            <person name="Pearson T.R."/>
            <person name="Brinkac L."/>
            <person name="Tan P."/>
            <person name="Nandi T."/>
            <person name="Crabtree J."/>
            <person name="Badger J."/>
            <person name="Beckstrom-Sternberg S."/>
            <person name="Saqib M."/>
            <person name="Schutzer S.E."/>
            <person name="Keim P."/>
            <person name="Nierman W.C."/>
        </authorList>
    </citation>
    <scope>NUCLEOTIDE SEQUENCE [LARGE SCALE GENOMIC DNA]</scope>
    <source>
        <strain>668</strain>
    </source>
</reference>
<protein>
    <recommendedName>
        <fullName evidence="1">Elongation factor P</fullName>
        <shortName evidence="1">EF-P</shortName>
    </recommendedName>
</protein>
<organism>
    <name type="scientific">Burkholderia pseudomallei (strain 668)</name>
    <dbReference type="NCBI Taxonomy" id="320373"/>
    <lineage>
        <taxon>Bacteria</taxon>
        <taxon>Pseudomonadati</taxon>
        <taxon>Pseudomonadota</taxon>
        <taxon>Betaproteobacteria</taxon>
        <taxon>Burkholderiales</taxon>
        <taxon>Burkholderiaceae</taxon>
        <taxon>Burkholderia</taxon>
        <taxon>pseudomallei group</taxon>
    </lineage>
</organism>
<name>EFP_BURP6</name>
<accession>A3NBS1</accession>
<dbReference type="EMBL" id="CP000570">
    <property type="protein sequence ID" value="ABN82669.1"/>
    <property type="molecule type" value="Genomic_DNA"/>
</dbReference>
<dbReference type="RefSeq" id="WP_004193484.1">
    <property type="nucleotide sequence ID" value="NC_009074.1"/>
</dbReference>
<dbReference type="SMR" id="A3NBS1"/>
<dbReference type="GeneID" id="93061002"/>
<dbReference type="KEGG" id="bpd:BURPS668_2771"/>
<dbReference type="HOGENOM" id="CLU_074944_2_1_4"/>
<dbReference type="UniPathway" id="UPA00345"/>
<dbReference type="GO" id="GO:0005737">
    <property type="term" value="C:cytoplasm"/>
    <property type="evidence" value="ECO:0007669"/>
    <property type="project" value="UniProtKB-SubCell"/>
</dbReference>
<dbReference type="GO" id="GO:0003746">
    <property type="term" value="F:translation elongation factor activity"/>
    <property type="evidence" value="ECO:0007669"/>
    <property type="project" value="UniProtKB-UniRule"/>
</dbReference>
<dbReference type="GO" id="GO:0043043">
    <property type="term" value="P:peptide biosynthetic process"/>
    <property type="evidence" value="ECO:0007669"/>
    <property type="project" value="InterPro"/>
</dbReference>
<dbReference type="CDD" id="cd04470">
    <property type="entry name" value="S1_EF-P_repeat_1"/>
    <property type="match status" value="1"/>
</dbReference>
<dbReference type="CDD" id="cd05794">
    <property type="entry name" value="S1_EF-P_repeat_2"/>
    <property type="match status" value="1"/>
</dbReference>
<dbReference type="FunFam" id="2.30.30.30:FF:000003">
    <property type="entry name" value="Elongation factor P"/>
    <property type="match status" value="1"/>
</dbReference>
<dbReference type="FunFam" id="2.40.50.140:FF:000004">
    <property type="entry name" value="Elongation factor P"/>
    <property type="match status" value="1"/>
</dbReference>
<dbReference type="FunFam" id="2.40.50.140:FF:000009">
    <property type="entry name" value="Elongation factor P"/>
    <property type="match status" value="1"/>
</dbReference>
<dbReference type="Gene3D" id="2.30.30.30">
    <property type="match status" value="1"/>
</dbReference>
<dbReference type="Gene3D" id="2.40.50.140">
    <property type="entry name" value="Nucleic acid-binding proteins"/>
    <property type="match status" value="2"/>
</dbReference>
<dbReference type="HAMAP" id="MF_00141">
    <property type="entry name" value="EF_P"/>
    <property type="match status" value="1"/>
</dbReference>
<dbReference type="InterPro" id="IPR015365">
    <property type="entry name" value="Elong-fact-P_C"/>
</dbReference>
<dbReference type="InterPro" id="IPR012340">
    <property type="entry name" value="NA-bd_OB-fold"/>
</dbReference>
<dbReference type="InterPro" id="IPR014722">
    <property type="entry name" value="Rib_uL2_dom2"/>
</dbReference>
<dbReference type="InterPro" id="IPR020599">
    <property type="entry name" value="Transl_elong_fac_P/YeiP"/>
</dbReference>
<dbReference type="InterPro" id="IPR013185">
    <property type="entry name" value="Transl_elong_KOW-like"/>
</dbReference>
<dbReference type="InterPro" id="IPR001059">
    <property type="entry name" value="Transl_elong_P/YeiP_cen"/>
</dbReference>
<dbReference type="InterPro" id="IPR013852">
    <property type="entry name" value="Transl_elong_P/YeiP_CS"/>
</dbReference>
<dbReference type="InterPro" id="IPR011768">
    <property type="entry name" value="Transl_elongation_fac_P"/>
</dbReference>
<dbReference type="InterPro" id="IPR008991">
    <property type="entry name" value="Translation_prot_SH3-like_sf"/>
</dbReference>
<dbReference type="NCBIfam" id="TIGR00038">
    <property type="entry name" value="efp"/>
    <property type="match status" value="1"/>
</dbReference>
<dbReference type="NCBIfam" id="NF001810">
    <property type="entry name" value="PRK00529.1"/>
    <property type="match status" value="1"/>
</dbReference>
<dbReference type="PANTHER" id="PTHR30053">
    <property type="entry name" value="ELONGATION FACTOR P"/>
    <property type="match status" value="1"/>
</dbReference>
<dbReference type="PANTHER" id="PTHR30053:SF12">
    <property type="entry name" value="ELONGATION FACTOR P (EF-P) FAMILY PROTEIN"/>
    <property type="match status" value="1"/>
</dbReference>
<dbReference type="Pfam" id="PF01132">
    <property type="entry name" value="EFP"/>
    <property type="match status" value="1"/>
</dbReference>
<dbReference type="Pfam" id="PF08207">
    <property type="entry name" value="EFP_N"/>
    <property type="match status" value="1"/>
</dbReference>
<dbReference type="Pfam" id="PF09285">
    <property type="entry name" value="Elong-fact-P_C"/>
    <property type="match status" value="1"/>
</dbReference>
<dbReference type="PIRSF" id="PIRSF005901">
    <property type="entry name" value="EF-P"/>
    <property type="match status" value="1"/>
</dbReference>
<dbReference type="SMART" id="SM01185">
    <property type="entry name" value="EFP"/>
    <property type="match status" value="1"/>
</dbReference>
<dbReference type="SMART" id="SM00841">
    <property type="entry name" value="Elong-fact-P_C"/>
    <property type="match status" value="1"/>
</dbReference>
<dbReference type="SUPFAM" id="SSF50249">
    <property type="entry name" value="Nucleic acid-binding proteins"/>
    <property type="match status" value="2"/>
</dbReference>
<dbReference type="SUPFAM" id="SSF50104">
    <property type="entry name" value="Translation proteins SH3-like domain"/>
    <property type="match status" value="1"/>
</dbReference>
<dbReference type="PROSITE" id="PS01275">
    <property type="entry name" value="EFP"/>
    <property type="match status" value="1"/>
</dbReference>
<proteinExistence type="inferred from homology"/>